<dbReference type="EC" id="5.6.1.7" evidence="1"/>
<dbReference type="EMBL" id="CP000301">
    <property type="protein sequence ID" value="ABD88714.1"/>
    <property type="molecule type" value="Genomic_DNA"/>
</dbReference>
<dbReference type="SMR" id="Q212H2"/>
<dbReference type="STRING" id="316056.RPC_3172"/>
<dbReference type="KEGG" id="rpc:RPC_3172"/>
<dbReference type="eggNOG" id="COG0459">
    <property type="taxonomic scope" value="Bacteria"/>
</dbReference>
<dbReference type="HOGENOM" id="CLU_016503_3_0_5"/>
<dbReference type="OrthoDB" id="9766614at2"/>
<dbReference type="GO" id="GO:0005737">
    <property type="term" value="C:cytoplasm"/>
    <property type="evidence" value="ECO:0007669"/>
    <property type="project" value="UniProtKB-SubCell"/>
</dbReference>
<dbReference type="GO" id="GO:0005524">
    <property type="term" value="F:ATP binding"/>
    <property type="evidence" value="ECO:0007669"/>
    <property type="project" value="UniProtKB-UniRule"/>
</dbReference>
<dbReference type="GO" id="GO:0140662">
    <property type="term" value="F:ATP-dependent protein folding chaperone"/>
    <property type="evidence" value="ECO:0007669"/>
    <property type="project" value="InterPro"/>
</dbReference>
<dbReference type="GO" id="GO:0016853">
    <property type="term" value="F:isomerase activity"/>
    <property type="evidence" value="ECO:0007669"/>
    <property type="project" value="UniProtKB-KW"/>
</dbReference>
<dbReference type="GO" id="GO:0051082">
    <property type="term" value="F:unfolded protein binding"/>
    <property type="evidence" value="ECO:0007669"/>
    <property type="project" value="UniProtKB-UniRule"/>
</dbReference>
<dbReference type="GO" id="GO:0042026">
    <property type="term" value="P:protein refolding"/>
    <property type="evidence" value="ECO:0007669"/>
    <property type="project" value="UniProtKB-UniRule"/>
</dbReference>
<dbReference type="CDD" id="cd03344">
    <property type="entry name" value="GroEL"/>
    <property type="match status" value="1"/>
</dbReference>
<dbReference type="FunFam" id="1.10.560.10:FF:000001">
    <property type="entry name" value="60 kDa chaperonin"/>
    <property type="match status" value="1"/>
</dbReference>
<dbReference type="FunFam" id="3.50.7.10:FF:000001">
    <property type="entry name" value="60 kDa chaperonin"/>
    <property type="match status" value="1"/>
</dbReference>
<dbReference type="Gene3D" id="3.50.7.10">
    <property type="entry name" value="GroEL"/>
    <property type="match status" value="1"/>
</dbReference>
<dbReference type="Gene3D" id="1.10.560.10">
    <property type="entry name" value="GroEL-like equatorial domain"/>
    <property type="match status" value="1"/>
</dbReference>
<dbReference type="Gene3D" id="3.30.260.10">
    <property type="entry name" value="TCP-1-like chaperonin intermediate domain"/>
    <property type="match status" value="1"/>
</dbReference>
<dbReference type="HAMAP" id="MF_00600">
    <property type="entry name" value="CH60"/>
    <property type="match status" value="1"/>
</dbReference>
<dbReference type="InterPro" id="IPR018370">
    <property type="entry name" value="Chaperonin_Cpn60_CS"/>
</dbReference>
<dbReference type="InterPro" id="IPR001844">
    <property type="entry name" value="Cpn60/GroEL"/>
</dbReference>
<dbReference type="InterPro" id="IPR002423">
    <property type="entry name" value="Cpn60/GroEL/TCP-1"/>
</dbReference>
<dbReference type="InterPro" id="IPR027409">
    <property type="entry name" value="GroEL-like_apical_dom_sf"/>
</dbReference>
<dbReference type="InterPro" id="IPR027413">
    <property type="entry name" value="GROEL-like_equatorial_sf"/>
</dbReference>
<dbReference type="InterPro" id="IPR027410">
    <property type="entry name" value="TCP-1-like_intermed_sf"/>
</dbReference>
<dbReference type="NCBIfam" id="TIGR02348">
    <property type="entry name" value="GroEL"/>
    <property type="match status" value="1"/>
</dbReference>
<dbReference type="NCBIfam" id="NF000592">
    <property type="entry name" value="PRK00013.1"/>
    <property type="match status" value="1"/>
</dbReference>
<dbReference type="NCBIfam" id="NF009487">
    <property type="entry name" value="PRK12849.1"/>
    <property type="match status" value="1"/>
</dbReference>
<dbReference type="NCBIfam" id="NF009488">
    <property type="entry name" value="PRK12850.1"/>
    <property type="match status" value="1"/>
</dbReference>
<dbReference type="NCBIfam" id="NF009489">
    <property type="entry name" value="PRK12851.1"/>
    <property type="match status" value="1"/>
</dbReference>
<dbReference type="NCBIfam" id="NF010704">
    <property type="entry name" value="PRK14104.1"/>
    <property type="match status" value="1"/>
</dbReference>
<dbReference type="PANTHER" id="PTHR45633">
    <property type="entry name" value="60 KDA HEAT SHOCK PROTEIN, MITOCHONDRIAL"/>
    <property type="match status" value="1"/>
</dbReference>
<dbReference type="Pfam" id="PF00118">
    <property type="entry name" value="Cpn60_TCP1"/>
    <property type="match status" value="1"/>
</dbReference>
<dbReference type="PRINTS" id="PR00298">
    <property type="entry name" value="CHAPERONIN60"/>
</dbReference>
<dbReference type="SUPFAM" id="SSF52029">
    <property type="entry name" value="GroEL apical domain-like"/>
    <property type="match status" value="1"/>
</dbReference>
<dbReference type="SUPFAM" id="SSF48592">
    <property type="entry name" value="GroEL equatorial domain-like"/>
    <property type="match status" value="1"/>
</dbReference>
<dbReference type="SUPFAM" id="SSF54849">
    <property type="entry name" value="GroEL-intermediate domain like"/>
    <property type="match status" value="1"/>
</dbReference>
<dbReference type="PROSITE" id="PS00296">
    <property type="entry name" value="CHAPERONINS_CPN60"/>
    <property type="match status" value="1"/>
</dbReference>
<accession>Q212H2</accession>
<gene>
    <name evidence="1" type="primary">groEL1</name>
    <name evidence="1" type="synonym">groL1</name>
    <name type="ordered locus">RPC_3172</name>
</gene>
<name>CH601_RHOPB</name>
<comment type="function">
    <text evidence="1">Together with its co-chaperonin GroES, plays an essential role in assisting protein folding. The GroEL-GroES system forms a nano-cage that allows encapsulation of the non-native substrate proteins and provides a physical environment optimized to promote and accelerate protein folding.</text>
</comment>
<comment type="catalytic activity">
    <reaction evidence="1">
        <text>ATP + H2O + a folded polypeptide = ADP + phosphate + an unfolded polypeptide.</text>
        <dbReference type="EC" id="5.6.1.7"/>
    </reaction>
</comment>
<comment type="subunit">
    <text evidence="1">Forms a cylinder of 14 subunits composed of two heptameric rings stacked back-to-back. Interacts with the co-chaperonin GroES.</text>
</comment>
<comment type="subcellular location">
    <subcellularLocation>
        <location evidence="1">Cytoplasm</location>
    </subcellularLocation>
</comment>
<comment type="similarity">
    <text evidence="1">Belongs to the chaperonin (HSP60) family.</text>
</comment>
<proteinExistence type="inferred from homology"/>
<feature type="chain" id="PRO_0000256970" description="Chaperonin GroEL 1">
    <location>
        <begin position="1"/>
        <end position="547"/>
    </location>
</feature>
<feature type="binding site" evidence="1">
    <location>
        <begin position="30"/>
        <end position="33"/>
    </location>
    <ligand>
        <name>ATP</name>
        <dbReference type="ChEBI" id="CHEBI:30616"/>
    </ligand>
</feature>
<feature type="binding site" evidence="1">
    <location>
        <position position="51"/>
    </location>
    <ligand>
        <name>ATP</name>
        <dbReference type="ChEBI" id="CHEBI:30616"/>
    </ligand>
</feature>
<feature type="binding site" evidence="1">
    <location>
        <begin position="87"/>
        <end position="91"/>
    </location>
    <ligand>
        <name>ATP</name>
        <dbReference type="ChEBI" id="CHEBI:30616"/>
    </ligand>
</feature>
<feature type="binding site" evidence="1">
    <location>
        <position position="415"/>
    </location>
    <ligand>
        <name>ATP</name>
        <dbReference type="ChEBI" id="CHEBI:30616"/>
    </ligand>
</feature>
<feature type="binding site" evidence="1">
    <location>
        <position position="496"/>
    </location>
    <ligand>
        <name>ATP</name>
        <dbReference type="ChEBI" id="CHEBI:30616"/>
    </ligand>
</feature>
<evidence type="ECO:0000255" key="1">
    <source>
        <dbReference type="HAMAP-Rule" id="MF_00600"/>
    </source>
</evidence>
<protein>
    <recommendedName>
        <fullName evidence="1">Chaperonin GroEL 1</fullName>
        <ecNumber evidence="1">5.6.1.7</ecNumber>
    </recommendedName>
    <alternativeName>
        <fullName evidence="1">60 kDa chaperonin 1</fullName>
    </alternativeName>
    <alternativeName>
        <fullName evidence="1">Chaperonin-60 1</fullName>
        <shortName evidence="1">Cpn60 1</shortName>
    </alternativeName>
</protein>
<organism>
    <name type="scientific">Rhodopseudomonas palustris (strain BisB18)</name>
    <dbReference type="NCBI Taxonomy" id="316056"/>
    <lineage>
        <taxon>Bacteria</taxon>
        <taxon>Pseudomonadati</taxon>
        <taxon>Pseudomonadota</taxon>
        <taxon>Alphaproteobacteria</taxon>
        <taxon>Hyphomicrobiales</taxon>
        <taxon>Nitrobacteraceae</taxon>
        <taxon>Rhodopseudomonas</taxon>
    </lineage>
</organism>
<keyword id="KW-0067">ATP-binding</keyword>
<keyword id="KW-0143">Chaperone</keyword>
<keyword id="KW-0963">Cytoplasm</keyword>
<keyword id="KW-0413">Isomerase</keyword>
<keyword id="KW-0547">Nucleotide-binding</keyword>
<sequence>MSAKEVKFGVDARDRMLRGVDILANAVKVTLGPKGRNVVLDKSFGAPRITKDGVTVAKEIELEDKFENMGAQMVREVASKSADLAGDGTTTATVLAAAIVREGAKSVAAGMNPMDLKRGIDLAVEAVVADLVKNSKKVTSNEEIAQVGTISANGDAEIGKFLSDAMKKVGNEGVITVEEAKSLETELDVVEGMQFDRGYISPYFVTNADKMRVEFDDAYILINEKKLSNLNELLPLLEAVVQTGKPLVIVAEDVEGEALATLVVNRLRGGLKVAAVKAPGFGDRRKAMLQDIAILTGGQAISEDLGIKMENVTLAMLGKAKKVMIDKENTTIVNGAGKKADIEARVAQIKAQIEETTSDYDREKLQERLAKLAGGVAVIRVGGATEIEVKERKDRVDDAMHATRAAVEEGILPGGGVALLRASEQLKRIKTQNDDQKTGVEIVRKALSWPARQIAINAGEDGSVIVGKILEKDQYSYGFDSQSGEYGDMVKKGIIDPTKVVRAAIQNAASVAALLITTEAMIAELPKKGNAGGGMPPGGGGMGGMDF</sequence>
<reference key="1">
    <citation type="submission" date="2006-03" db="EMBL/GenBank/DDBJ databases">
        <title>Complete sequence of Rhodopseudomonas palustris BisB18.</title>
        <authorList>
            <consortium name="US DOE Joint Genome Institute"/>
            <person name="Copeland A."/>
            <person name="Lucas S."/>
            <person name="Lapidus A."/>
            <person name="Barry K."/>
            <person name="Detter J.C."/>
            <person name="Glavina del Rio T."/>
            <person name="Hammon N."/>
            <person name="Israni S."/>
            <person name="Dalin E."/>
            <person name="Tice H."/>
            <person name="Pitluck S."/>
            <person name="Chain P."/>
            <person name="Malfatti S."/>
            <person name="Shin M."/>
            <person name="Vergez L."/>
            <person name="Schmutz J."/>
            <person name="Larimer F."/>
            <person name="Land M."/>
            <person name="Hauser L."/>
            <person name="Pelletier D.A."/>
            <person name="Kyrpides N."/>
            <person name="Anderson I."/>
            <person name="Oda Y."/>
            <person name="Harwood C.S."/>
            <person name="Richardson P."/>
        </authorList>
    </citation>
    <scope>NUCLEOTIDE SEQUENCE [LARGE SCALE GENOMIC DNA]</scope>
    <source>
        <strain>BisB18</strain>
    </source>
</reference>